<accession>Q6HAF4</accession>
<name>RSMG_BACHK</name>
<organism>
    <name type="scientific">Bacillus thuringiensis subsp. konkukian (strain 97-27)</name>
    <dbReference type="NCBI Taxonomy" id="281309"/>
    <lineage>
        <taxon>Bacteria</taxon>
        <taxon>Bacillati</taxon>
        <taxon>Bacillota</taxon>
        <taxon>Bacilli</taxon>
        <taxon>Bacillales</taxon>
        <taxon>Bacillaceae</taxon>
        <taxon>Bacillus</taxon>
        <taxon>Bacillus cereus group</taxon>
    </lineage>
</organism>
<gene>
    <name evidence="1" type="primary">rsmG</name>
    <name type="ordered locus">BT9727_5163</name>
</gene>
<feature type="chain" id="PRO_0000184216" description="Ribosomal RNA small subunit methyltransferase G">
    <location>
        <begin position="1"/>
        <end position="239"/>
    </location>
</feature>
<feature type="binding site" evidence="1">
    <location>
        <position position="77"/>
    </location>
    <ligand>
        <name>S-adenosyl-L-methionine</name>
        <dbReference type="ChEBI" id="CHEBI:59789"/>
    </ligand>
</feature>
<feature type="binding site" evidence="1">
    <location>
        <position position="82"/>
    </location>
    <ligand>
        <name>S-adenosyl-L-methionine</name>
        <dbReference type="ChEBI" id="CHEBI:59789"/>
    </ligand>
</feature>
<feature type="binding site" evidence="1">
    <location>
        <begin position="128"/>
        <end position="129"/>
    </location>
    <ligand>
        <name>S-adenosyl-L-methionine</name>
        <dbReference type="ChEBI" id="CHEBI:59789"/>
    </ligand>
</feature>
<feature type="binding site" evidence="1">
    <location>
        <position position="147"/>
    </location>
    <ligand>
        <name>S-adenosyl-L-methionine</name>
        <dbReference type="ChEBI" id="CHEBI:59789"/>
    </ligand>
</feature>
<dbReference type="EC" id="2.1.1.-" evidence="1"/>
<dbReference type="EMBL" id="AE017355">
    <property type="protein sequence ID" value="AAT62676.1"/>
    <property type="molecule type" value="Genomic_DNA"/>
</dbReference>
<dbReference type="RefSeq" id="WP_001019621.1">
    <property type="nucleotide sequence ID" value="NC_005957.1"/>
</dbReference>
<dbReference type="RefSeq" id="YP_039472.1">
    <property type="nucleotide sequence ID" value="NC_005957.1"/>
</dbReference>
<dbReference type="SMR" id="Q6HAF4"/>
<dbReference type="GeneID" id="93005640"/>
<dbReference type="KEGG" id="btk:BT9727_5163"/>
<dbReference type="PATRIC" id="fig|281309.8.peg.5488"/>
<dbReference type="HOGENOM" id="CLU_065341_0_2_9"/>
<dbReference type="Proteomes" id="UP000001301">
    <property type="component" value="Chromosome"/>
</dbReference>
<dbReference type="GO" id="GO:0005829">
    <property type="term" value="C:cytosol"/>
    <property type="evidence" value="ECO:0007669"/>
    <property type="project" value="TreeGrafter"/>
</dbReference>
<dbReference type="GO" id="GO:0070043">
    <property type="term" value="F:rRNA (guanine-N7-)-methyltransferase activity"/>
    <property type="evidence" value="ECO:0007669"/>
    <property type="project" value="UniProtKB-UniRule"/>
</dbReference>
<dbReference type="CDD" id="cd02440">
    <property type="entry name" value="AdoMet_MTases"/>
    <property type="match status" value="1"/>
</dbReference>
<dbReference type="FunFam" id="3.40.50.150:FF:000041">
    <property type="entry name" value="Ribosomal RNA small subunit methyltransferase G"/>
    <property type="match status" value="1"/>
</dbReference>
<dbReference type="Gene3D" id="3.40.50.150">
    <property type="entry name" value="Vaccinia Virus protein VP39"/>
    <property type="match status" value="1"/>
</dbReference>
<dbReference type="HAMAP" id="MF_00074">
    <property type="entry name" value="16SrRNA_methyltr_G"/>
    <property type="match status" value="1"/>
</dbReference>
<dbReference type="InterPro" id="IPR003682">
    <property type="entry name" value="rRNA_ssu_MeTfrase_G"/>
</dbReference>
<dbReference type="InterPro" id="IPR029063">
    <property type="entry name" value="SAM-dependent_MTases_sf"/>
</dbReference>
<dbReference type="NCBIfam" id="TIGR00138">
    <property type="entry name" value="rsmG_gidB"/>
    <property type="match status" value="1"/>
</dbReference>
<dbReference type="PANTHER" id="PTHR31760">
    <property type="entry name" value="S-ADENOSYL-L-METHIONINE-DEPENDENT METHYLTRANSFERASES SUPERFAMILY PROTEIN"/>
    <property type="match status" value="1"/>
</dbReference>
<dbReference type="PANTHER" id="PTHR31760:SF0">
    <property type="entry name" value="S-ADENOSYL-L-METHIONINE-DEPENDENT METHYLTRANSFERASES SUPERFAMILY PROTEIN"/>
    <property type="match status" value="1"/>
</dbReference>
<dbReference type="Pfam" id="PF02527">
    <property type="entry name" value="GidB"/>
    <property type="match status" value="1"/>
</dbReference>
<dbReference type="PIRSF" id="PIRSF003078">
    <property type="entry name" value="GidB"/>
    <property type="match status" value="1"/>
</dbReference>
<dbReference type="SUPFAM" id="SSF53335">
    <property type="entry name" value="S-adenosyl-L-methionine-dependent methyltransferases"/>
    <property type="match status" value="1"/>
</dbReference>
<comment type="function">
    <text evidence="1">Specifically methylates the N7 position of guanine in position 535 of 16S rRNA.</text>
</comment>
<comment type="subcellular location">
    <subcellularLocation>
        <location evidence="1">Cytoplasm</location>
    </subcellularLocation>
</comment>
<comment type="similarity">
    <text evidence="1">Belongs to the methyltransferase superfamily. RNA methyltransferase RsmG family.</text>
</comment>
<reference key="1">
    <citation type="journal article" date="2006" name="J. Bacteriol.">
        <title>Pathogenomic sequence analysis of Bacillus cereus and Bacillus thuringiensis isolates closely related to Bacillus anthracis.</title>
        <authorList>
            <person name="Han C.S."/>
            <person name="Xie G."/>
            <person name="Challacombe J.F."/>
            <person name="Altherr M.R."/>
            <person name="Bhotika S.S."/>
            <person name="Bruce D."/>
            <person name="Campbell C.S."/>
            <person name="Campbell M.L."/>
            <person name="Chen J."/>
            <person name="Chertkov O."/>
            <person name="Cleland C."/>
            <person name="Dimitrijevic M."/>
            <person name="Doggett N.A."/>
            <person name="Fawcett J.J."/>
            <person name="Glavina T."/>
            <person name="Goodwin L.A."/>
            <person name="Hill K.K."/>
            <person name="Hitchcock P."/>
            <person name="Jackson P.J."/>
            <person name="Keim P."/>
            <person name="Kewalramani A.R."/>
            <person name="Longmire J."/>
            <person name="Lucas S."/>
            <person name="Malfatti S."/>
            <person name="McMurry K."/>
            <person name="Meincke L.J."/>
            <person name="Misra M."/>
            <person name="Moseman B.L."/>
            <person name="Mundt M."/>
            <person name="Munk A.C."/>
            <person name="Okinaka R.T."/>
            <person name="Parson-Quintana B."/>
            <person name="Reilly L.P."/>
            <person name="Richardson P."/>
            <person name="Robinson D.L."/>
            <person name="Rubin E."/>
            <person name="Saunders E."/>
            <person name="Tapia R."/>
            <person name="Tesmer J.G."/>
            <person name="Thayer N."/>
            <person name="Thompson L.S."/>
            <person name="Tice H."/>
            <person name="Ticknor L.O."/>
            <person name="Wills P.L."/>
            <person name="Brettin T.S."/>
            <person name="Gilna P."/>
        </authorList>
    </citation>
    <scope>NUCLEOTIDE SEQUENCE [LARGE SCALE GENOMIC DNA]</scope>
    <source>
        <strain>97-27</strain>
    </source>
</reference>
<sequence length="239" mass="27196">MNIEQFQSMLEEKGITLSSRQLEQFEIYFETLVEWNEKMNLTAITEKEEVYLKHFFDSITAAFYYDFSKPFSICDVGAGAGFPSIPLKICFPHLKVTIVDSLQKRINFLNHLAQKLELSDVAFCHDRAETFGKKEGVREAYDIVMARAVARLSVLSELCLPLVKVGGTFIAMKGAAANEEIENGKYALEVLGGDLKEMSTFQLPFEESERNILLIEKKRKTPKKYPRKPGTPNKLPIEK</sequence>
<proteinExistence type="inferred from homology"/>
<protein>
    <recommendedName>
        <fullName evidence="1">Ribosomal RNA small subunit methyltransferase G</fullName>
        <ecNumber evidence="1">2.1.1.-</ecNumber>
    </recommendedName>
    <alternativeName>
        <fullName evidence="1">16S rRNA 7-methylguanosine methyltransferase</fullName>
        <shortName evidence="1">16S rRNA m7G methyltransferase</shortName>
    </alternativeName>
</protein>
<keyword id="KW-0963">Cytoplasm</keyword>
<keyword id="KW-0489">Methyltransferase</keyword>
<keyword id="KW-0698">rRNA processing</keyword>
<keyword id="KW-0949">S-adenosyl-L-methionine</keyword>
<keyword id="KW-0808">Transferase</keyword>
<evidence type="ECO:0000255" key="1">
    <source>
        <dbReference type="HAMAP-Rule" id="MF_00074"/>
    </source>
</evidence>